<sequence length="108" mass="10892">MSRFVSAALVGAALLVSGNAFAYDAAAGKATYDASCATCHKTGMMGAPKVGDKAAWAPRIAQGMNTLVSKSIKGYKGTKGMMPAKGGNAKLTDAQVGNAVAYMVGQSK</sequence>
<keyword id="KW-0002">3D-structure</keyword>
<keyword id="KW-0249">Electron transport</keyword>
<keyword id="KW-0349">Heme</keyword>
<keyword id="KW-0408">Iron</keyword>
<keyword id="KW-0479">Metal-binding</keyword>
<keyword id="KW-0602">Photosynthesis</keyword>
<keyword id="KW-1185">Reference proteome</keyword>
<keyword id="KW-0732">Signal</keyword>
<keyword id="KW-0813">Transport</keyword>
<feature type="signal peptide" evidence="1">
    <location>
        <begin position="1"/>
        <end position="22"/>
    </location>
</feature>
<feature type="chain" id="PRO_0000006545" description="Cytochrome c-555">
    <location>
        <begin position="23"/>
        <end position="108"/>
    </location>
</feature>
<feature type="binding site" description="covalent" evidence="2">
    <location>
        <position position="36"/>
    </location>
    <ligand>
        <name>heme c</name>
        <dbReference type="ChEBI" id="CHEBI:61717"/>
    </ligand>
</feature>
<feature type="binding site" description="covalent" evidence="2">
    <location>
        <position position="39"/>
    </location>
    <ligand>
        <name>heme c</name>
        <dbReference type="ChEBI" id="CHEBI:61717"/>
    </ligand>
</feature>
<feature type="binding site" description="axial binding residue" evidence="2">
    <location>
        <position position="40"/>
    </location>
    <ligand>
        <name>heme c</name>
        <dbReference type="ChEBI" id="CHEBI:61717"/>
    </ligand>
    <ligandPart>
        <name>Fe</name>
        <dbReference type="ChEBI" id="CHEBI:18248"/>
    </ligandPart>
</feature>
<feature type="binding site" description="axial binding residue" evidence="2">
    <location>
        <position position="82"/>
    </location>
    <ligand>
        <name>heme c</name>
        <dbReference type="ChEBI" id="CHEBI:61717"/>
    </ligand>
    <ligandPart>
        <name>Fe</name>
        <dbReference type="ChEBI" id="CHEBI:18248"/>
    </ligandPart>
</feature>
<feature type="helix" evidence="3">
    <location>
        <begin position="25"/>
        <end position="35"/>
    </location>
</feature>
<feature type="helix" evidence="3">
    <location>
        <begin position="37"/>
        <end position="40"/>
    </location>
</feature>
<feature type="turn" evidence="3">
    <location>
        <begin position="41"/>
        <end position="43"/>
    </location>
</feature>
<feature type="helix" evidence="3">
    <location>
        <begin position="44"/>
        <end position="46"/>
    </location>
</feature>
<feature type="helix" evidence="3">
    <location>
        <begin position="53"/>
        <end position="60"/>
    </location>
</feature>
<feature type="helix" evidence="3">
    <location>
        <begin position="64"/>
        <end position="73"/>
    </location>
</feature>
<feature type="helix" evidence="3">
    <location>
        <begin position="84"/>
        <end position="87"/>
    </location>
</feature>
<feature type="helix" evidence="3">
    <location>
        <begin position="93"/>
        <end position="105"/>
    </location>
</feature>
<protein>
    <recommendedName>
        <fullName>Cytochrome c-555</fullName>
    </recommendedName>
    <alternativeName>
        <fullName>Cytochrome c555</fullName>
    </alternativeName>
</protein>
<evidence type="ECO:0000250" key="1"/>
<evidence type="ECO:0000255" key="2">
    <source>
        <dbReference type="PROSITE-ProRule" id="PRU00433"/>
    </source>
</evidence>
<evidence type="ECO:0007829" key="3">
    <source>
        <dbReference type="PDB" id="4J20"/>
    </source>
</evidence>
<proteinExistence type="evidence at protein level"/>
<reference key="1">
    <citation type="journal article" date="2002" name="Proc. Natl. Acad. Sci. U.S.A.">
        <title>The complete genome sequence of Chlorobium tepidum TLS, a photosynthetic, anaerobic, green-sulfur bacterium.</title>
        <authorList>
            <person name="Eisen J.A."/>
            <person name="Nelson K.E."/>
            <person name="Paulsen I.T."/>
            <person name="Heidelberg J.F."/>
            <person name="Wu M."/>
            <person name="Dodson R.J."/>
            <person name="DeBoy R.T."/>
            <person name="Gwinn M.L."/>
            <person name="Nelson W.C."/>
            <person name="Haft D.H."/>
            <person name="Hickey E.K."/>
            <person name="Peterson J.D."/>
            <person name="Durkin A.S."/>
            <person name="Kolonay J.F."/>
            <person name="Yang F."/>
            <person name="Holt I.E."/>
            <person name="Umayam L.A."/>
            <person name="Mason T.M."/>
            <person name="Brenner M."/>
            <person name="Shea T.P."/>
            <person name="Parksey D.S."/>
            <person name="Nierman W.C."/>
            <person name="Feldblyum T.V."/>
            <person name="Hansen C.L."/>
            <person name="Craven M.B."/>
            <person name="Radune D."/>
            <person name="Vamathevan J.J."/>
            <person name="Khouri H.M."/>
            <person name="White O."/>
            <person name="Gruber T.M."/>
            <person name="Ketchum K.A."/>
            <person name="Venter J.C."/>
            <person name="Tettelin H."/>
            <person name="Bryant D.A."/>
            <person name="Fraser C.M."/>
        </authorList>
    </citation>
    <scope>NUCLEOTIDE SEQUENCE [LARGE SCALE GENOMIC DNA]</scope>
    <source>
        <strain>ATCC 49652 / DSM 12025 / NBRC 103806 / TLS</strain>
    </source>
</reference>
<comment type="function">
    <text>This basic c-type monoheme cytochrome has been found exclusively in the green photosynthetic bacteria, although its role in bacterial photosynthesis is not established. It has an unusually low redox potential compared with mitochondrial cytochrome c. It is reactive with cytochrome c oxidases but not with reductases.</text>
</comment>
<comment type="PTM">
    <text>Binds 1 heme c group covalently per subunit.</text>
</comment>
<organism>
    <name type="scientific">Chlorobaculum tepidum (strain ATCC 49652 / DSM 12025 / NBRC 103806 / TLS)</name>
    <name type="common">Chlorobium tepidum</name>
    <dbReference type="NCBI Taxonomy" id="194439"/>
    <lineage>
        <taxon>Bacteria</taxon>
        <taxon>Pseudomonadati</taxon>
        <taxon>Chlorobiota</taxon>
        <taxon>Chlorobiia</taxon>
        <taxon>Chlorobiales</taxon>
        <taxon>Chlorobiaceae</taxon>
        <taxon>Chlorobaculum</taxon>
    </lineage>
</organism>
<dbReference type="EMBL" id="AE006470">
    <property type="protein sequence ID" value="AAM71323.1"/>
    <property type="molecule type" value="Genomic_DNA"/>
</dbReference>
<dbReference type="RefSeq" id="NP_660981.1">
    <property type="nucleotide sequence ID" value="NC_002932.3"/>
</dbReference>
<dbReference type="RefSeq" id="WP_010931769.1">
    <property type="nucleotide sequence ID" value="NC_002932.3"/>
</dbReference>
<dbReference type="PDB" id="4J20">
    <property type="method" value="X-ray"/>
    <property type="resolution" value="1.30 A"/>
    <property type="chains" value="A/B=21-108"/>
</dbReference>
<dbReference type="PDBsum" id="4J20"/>
<dbReference type="SMR" id="Q8KG93"/>
<dbReference type="STRING" id="194439.CT0075"/>
<dbReference type="EnsemblBacteria" id="AAM71323">
    <property type="protein sequence ID" value="AAM71323"/>
    <property type="gene ID" value="CT0075"/>
</dbReference>
<dbReference type="KEGG" id="cte:CT0075"/>
<dbReference type="eggNOG" id="COG3245">
    <property type="taxonomic scope" value="Bacteria"/>
</dbReference>
<dbReference type="HOGENOM" id="CLU_082349_4_1_10"/>
<dbReference type="OrthoDB" id="9811281at2"/>
<dbReference type="EvolutionaryTrace" id="Q8KG93"/>
<dbReference type="Proteomes" id="UP000001007">
    <property type="component" value="Chromosome"/>
</dbReference>
<dbReference type="GO" id="GO:0009055">
    <property type="term" value="F:electron transfer activity"/>
    <property type="evidence" value="ECO:0007669"/>
    <property type="project" value="InterPro"/>
</dbReference>
<dbReference type="GO" id="GO:0020037">
    <property type="term" value="F:heme binding"/>
    <property type="evidence" value="ECO:0007669"/>
    <property type="project" value="InterPro"/>
</dbReference>
<dbReference type="GO" id="GO:0005506">
    <property type="term" value="F:iron ion binding"/>
    <property type="evidence" value="ECO:0007669"/>
    <property type="project" value="InterPro"/>
</dbReference>
<dbReference type="GO" id="GO:0015979">
    <property type="term" value="P:photosynthesis"/>
    <property type="evidence" value="ECO:0007669"/>
    <property type="project" value="UniProtKB-KW"/>
</dbReference>
<dbReference type="Gene3D" id="1.10.760.10">
    <property type="entry name" value="Cytochrome c-like domain"/>
    <property type="match status" value="1"/>
</dbReference>
<dbReference type="InterPro" id="IPR009056">
    <property type="entry name" value="Cyt_c-like_dom"/>
</dbReference>
<dbReference type="InterPro" id="IPR036909">
    <property type="entry name" value="Cyt_c-like_dom_sf"/>
</dbReference>
<dbReference type="InterPro" id="IPR002323">
    <property type="entry name" value="Cyt_CIE"/>
</dbReference>
<dbReference type="PANTHER" id="PTHR40942">
    <property type="match status" value="1"/>
</dbReference>
<dbReference type="PANTHER" id="PTHR40942:SF4">
    <property type="entry name" value="CYTOCHROME C5"/>
    <property type="match status" value="1"/>
</dbReference>
<dbReference type="Pfam" id="PF13442">
    <property type="entry name" value="Cytochrome_CBB3"/>
    <property type="match status" value="1"/>
</dbReference>
<dbReference type="PRINTS" id="PR00607">
    <property type="entry name" value="CYTCHROMECIE"/>
</dbReference>
<dbReference type="SUPFAM" id="SSF46626">
    <property type="entry name" value="Cytochrome c"/>
    <property type="match status" value="1"/>
</dbReference>
<dbReference type="PROSITE" id="PS51007">
    <property type="entry name" value="CYTC"/>
    <property type="match status" value="1"/>
</dbReference>
<name>C555_CHLTE</name>
<accession>Q8KG93</accession>
<gene>
    <name type="ordered locus">CT0075</name>
</gene>